<proteinExistence type="evidence at protein level"/>
<comment type="function">
    <text evidence="4 5">Binds specifically to phosphatidylinositol 3,4-diphosphate (PtdIns3,4P2), but not to other phosphoinositides. May recruit other proteins to the plasma membrane.</text>
</comment>
<comment type="subunit">
    <text>Binds MPDZ and PTPN13.</text>
</comment>
<comment type="interaction">
    <interactant intactId="EBI-8079166">
        <id>Q9ERS5</id>
    </interactant>
    <interactant intactId="EBI-821405">
        <id>O75970</id>
        <label>MPDZ</label>
    </interactant>
    <organismsDiffer>true</organismsDiffer>
    <experiments>5</experiments>
</comment>
<comment type="subcellular location">
    <subcellularLocation>
        <location evidence="4">Cytoplasm</location>
    </subcellularLocation>
    <subcellularLocation>
        <location evidence="4">Cell membrane</location>
        <topology evidence="4">Peripheral membrane protein</topology>
    </subcellularLocation>
    <subcellularLocation>
        <location evidence="4">Nucleus</location>
    </subcellularLocation>
    <text>Locates to the plasma membrane after treatments that stimulate the production of PtdIns3,4P2.</text>
</comment>
<accession>Q9ERS5</accession>
<accession>Q8BY29</accession>
<protein>
    <recommendedName>
        <fullName>Pleckstrin homology domain-containing family A member 2</fullName>
        <shortName>PH domain-containing family A member 2</shortName>
    </recommendedName>
    <alternativeName>
        <fullName>PH domain-containing adaptor PHAD47</fullName>
    </alternativeName>
    <alternativeName>
        <fullName>Tandem PH domain-containing protein 2</fullName>
        <shortName>TAPP-2</shortName>
    </alternativeName>
</protein>
<organism>
    <name type="scientific">Mus musculus</name>
    <name type="common">Mouse</name>
    <dbReference type="NCBI Taxonomy" id="10090"/>
    <lineage>
        <taxon>Eukaryota</taxon>
        <taxon>Metazoa</taxon>
        <taxon>Chordata</taxon>
        <taxon>Craniata</taxon>
        <taxon>Vertebrata</taxon>
        <taxon>Euteleostomi</taxon>
        <taxon>Mammalia</taxon>
        <taxon>Eutheria</taxon>
        <taxon>Euarchontoglires</taxon>
        <taxon>Glires</taxon>
        <taxon>Rodentia</taxon>
        <taxon>Myomorpha</taxon>
        <taxon>Muroidea</taxon>
        <taxon>Muridae</taxon>
        <taxon>Murinae</taxon>
        <taxon>Mus</taxon>
        <taxon>Mus</taxon>
    </lineage>
</organism>
<dbReference type="EMBL" id="AF286161">
    <property type="protein sequence ID" value="AAG15198.1"/>
    <property type="molecule type" value="mRNA"/>
</dbReference>
<dbReference type="EMBL" id="AF418551">
    <property type="protein sequence ID" value="AAL57436.1"/>
    <property type="molecule type" value="mRNA"/>
</dbReference>
<dbReference type="EMBL" id="AK042324">
    <property type="protein sequence ID" value="BAC31224.2"/>
    <property type="molecule type" value="mRNA"/>
</dbReference>
<dbReference type="EMBL" id="AK078212">
    <property type="protein sequence ID" value="BAC37176.1"/>
    <property type="molecule type" value="mRNA"/>
</dbReference>
<dbReference type="EMBL" id="AK088395">
    <property type="protein sequence ID" value="BAC40325.1"/>
    <property type="molecule type" value="mRNA"/>
</dbReference>
<dbReference type="EMBL" id="BC010215">
    <property type="protein sequence ID" value="AAH10215.1"/>
    <property type="molecule type" value="mRNA"/>
</dbReference>
<dbReference type="CCDS" id="CCDS22198.1"/>
<dbReference type="RefSeq" id="NP_001414275.1">
    <property type="nucleotide sequence ID" value="NM_001427346.1"/>
</dbReference>
<dbReference type="RefSeq" id="NP_001414276.1">
    <property type="nucleotide sequence ID" value="NM_001427347.1"/>
</dbReference>
<dbReference type="RefSeq" id="NP_001414277.1">
    <property type="nucleotide sequence ID" value="NM_001427348.1"/>
</dbReference>
<dbReference type="RefSeq" id="NP_001414278.1">
    <property type="nucleotide sequence ID" value="NM_001427349.1"/>
</dbReference>
<dbReference type="RefSeq" id="NP_001414279.1">
    <property type="nucleotide sequence ID" value="NM_001427350.1"/>
</dbReference>
<dbReference type="RefSeq" id="NP_112547.1">
    <property type="nucleotide sequence ID" value="NM_031257.4"/>
</dbReference>
<dbReference type="RefSeq" id="XP_006509290.1">
    <property type="nucleotide sequence ID" value="XM_006509227.2"/>
</dbReference>
<dbReference type="RefSeq" id="XP_006509291.1">
    <property type="nucleotide sequence ID" value="XM_006509228.3"/>
</dbReference>
<dbReference type="RefSeq" id="XP_006509293.1">
    <property type="nucleotide sequence ID" value="XM_006509230.2"/>
</dbReference>
<dbReference type="RefSeq" id="XP_036010287.1">
    <property type="nucleotide sequence ID" value="XM_036154394.1"/>
</dbReference>
<dbReference type="PDB" id="1V5P">
    <property type="method" value="NMR"/>
    <property type="chains" value="A=1-113"/>
</dbReference>
<dbReference type="PDBsum" id="1V5P"/>
<dbReference type="BMRB" id="Q9ERS5"/>
<dbReference type="SMR" id="Q9ERS5"/>
<dbReference type="BioGRID" id="219926">
    <property type="interactions" value="2"/>
</dbReference>
<dbReference type="FunCoup" id="Q9ERS5">
    <property type="interactions" value="178"/>
</dbReference>
<dbReference type="IntAct" id="Q9ERS5">
    <property type="interactions" value="2"/>
</dbReference>
<dbReference type="MINT" id="Q9ERS5"/>
<dbReference type="STRING" id="10090.ENSMUSP00000066546"/>
<dbReference type="GlyGen" id="Q9ERS5">
    <property type="glycosylation" value="1 site, 1 N-linked glycan (1 site)"/>
</dbReference>
<dbReference type="iPTMnet" id="Q9ERS5"/>
<dbReference type="PhosphoSitePlus" id="Q9ERS5"/>
<dbReference type="jPOST" id="Q9ERS5"/>
<dbReference type="PaxDb" id="10090-ENSMUSP00000122564"/>
<dbReference type="ProteomicsDB" id="289899"/>
<dbReference type="Antibodypedia" id="1200">
    <property type="antibodies" value="18 antibodies from 9 providers"/>
</dbReference>
<dbReference type="DNASU" id="83436"/>
<dbReference type="Ensembl" id="ENSMUST00000064883.14">
    <property type="protein sequence ID" value="ENSMUSP00000066546.7"/>
    <property type="gene ID" value="ENSMUSG00000031557.17"/>
</dbReference>
<dbReference type="Ensembl" id="ENSMUST00000128715.8">
    <property type="protein sequence ID" value="ENSMUSP00000122564.2"/>
    <property type="gene ID" value="ENSMUSG00000031557.17"/>
</dbReference>
<dbReference type="GeneID" id="83436"/>
<dbReference type="KEGG" id="mmu:83436"/>
<dbReference type="UCSC" id="uc009lfq.3">
    <property type="organism name" value="mouse"/>
</dbReference>
<dbReference type="AGR" id="MGI:1928144"/>
<dbReference type="CTD" id="59339"/>
<dbReference type="MGI" id="MGI:1928144">
    <property type="gene designation" value="Plekha2"/>
</dbReference>
<dbReference type="VEuPathDB" id="HostDB:ENSMUSG00000031557"/>
<dbReference type="eggNOG" id="ENOG502QV0M">
    <property type="taxonomic scope" value="Eukaryota"/>
</dbReference>
<dbReference type="GeneTree" id="ENSGT00940000158064"/>
<dbReference type="InParanoid" id="Q9ERS5"/>
<dbReference type="OMA" id="KCHPKEM"/>
<dbReference type="OrthoDB" id="185175at2759"/>
<dbReference type="PhylomeDB" id="Q9ERS5"/>
<dbReference type="TreeFam" id="TF329516"/>
<dbReference type="Reactome" id="R-MMU-1660499">
    <property type="pathway name" value="Synthesis of PIPs at the plasma membrane"/>
</dbReference>
<dbReference type="BioGRID-ORCS" id="83436">
    <property type="hits" value="3 hits in 79 CRISPR screens"/>
</dbReference>
<dbReference type="ChiTaRS" id="Plekha2">
    <property type="organism name" value="mouse"/>
</dbReference>
<dbReference type="EvolutionaryTrace" id="Q9ERS5"/>
<dbReference type="PRO" id="PR:Q9ERS5"/>
<dbReference type="Proteomes" id="UP000000589">
    <property type="component" value="Chromosome 8"/>
</dbReference>
<dbReference type="RNAct" id="Q9ERS5">
    <property type="molecule type" value="protein"/>
</dbReference>
<dbReference type="Bgee" id="ENSMUSG00000031557">
    <property type="expression patterns" value="Expressed in peripheral lymph node and 239 other cell types or tissues"/>
</dbReference>
<dbReference type="ExpressionAtlas" id="Q9ERS5">
    <property type="expression patterns" value="baseline and differential"/>
</dbReference>
<dbReference type="GO" id="GO:0005737">
    <property type="term" value="C:cytoplasm"/>
    <property type="evidence" value="ECO:0007669"/>
    <property type="project" value="UniProtKB-SubCell"/>
</dbReference>
<dbReference type="GO" id="GO:0005634">
    <property type="term" value="C:nucleus"/>
    <property type="evidence" value="ECO:0007669"/>
    <property type="project" value="UniProtKB-SubCell"/>
</dbReference>
<dbReference type="GO" id="GO:0005886">
    <property type="term" value="C:plasma membrane"/>
    <property type="evidence" value="ECO:0007669"/>
    <property type="project" value="UniProtKB-SubCell"/>
</dbReference>
<dbReference type="GO" id="GO:0032991">
    <property type="term" value="C:protein-containing complex"/>
    <property type="evidence" value="ECO:0007669"/>
    <property type="project" value="Ensembl"/>
</dbReference>
<dbReference type="GO" id="GO:0001968">
    <property type="term" value="F:fibronectin binding"/>
    <property type="evidence" value="ECO:0007669"/>
    <property type="project" value="Ensembl"/>
</dbReference>
<dbReference type="GO" id="GO:0043236">
    <property type="term" value="F:laminin binding"/>
    <property type="evidence" value="ECO:0007669"/>
    <property type="project" value="Ensembl"/>
</dbReference>
<dbReference type="GO" id="GO:0008289">
    <property type="term" value="F:lipid binding"/>
    <property type="evidence" value="ECO:0007669"/>
    <property type="project" value="UniProtKB-KW"/>
</dbReference>
<dbReference type="GO" id="GO:0030165">
    <property type="term" value="F:PDZ domain binding"/>
    <property type="evidence" value="ECO:0000353"/>
    <property type="project" value="UniProtKB"/>
</dbReference>
<dbReference type="GO" id="GO:0043325">
    <property type="term" value="F:phosphatidylinositol-3,4-bisphosphate binding"/>
    <property type="evidence" value="ECO:0000314"/>
    <property type="project" value="MGI"/>
</dbReference>
<dbReference type="GO" id="GO:0001954">
    <property type="term" value="P:positive regulation of cell-matrix adhesion"/>
    <property type="evidence" value="ECO:0007669"/>
    <property type="project" value="Ensembl"/>
</dbReference>
<dbReference type="CDD" id="cd13270">
    <property type="entry name" value="PH1_TAPP1_2"/>
    <property type="match status" value="1"/>
</dbReference>
<dbReference type="CDD" id="cd13271">
    <property type="entry name" value="PH2_TAPP1_2"/>
    <property type="match status" value="1"/>
</dbReference>
<dbReference type="FunFam" id="2.30.29.30:FF:000049">
    <property type="entry name" value="pleckstrin homology domain-containing family A member 1 isoform X1"/>
    <property type="match status" value="1"/>
</dbReference>
<dbReference type="FunFam" id="2.30.29.30:FF:000042">
    <property type="entry name" value="pleckstrin homology domain-containing family A member 1 isoform X2"/>
    <property type="match status" value="1"/>
</dbReference>
<dbReference type="Gene3D" id="2.30.29.30">
    <property type="entry name" value="Pleckstrin-homology domain (PH domain)/Phosphotyrosine-binding domain (PTB)"/>
    <property type="match status" value="2"/>
</dbReference>
<dbReference type="InterPro" id="IPR011993">
    <property type="entry name" value="PH-like_dom_sf"/>
</dbReference>
<dbReference type="InterPro" id="IPR001849">
    <property type="entry name" value="PH_domain"/>
</dbReference>
<dbReference type="InterPro" id="IPR051707">
    <property type="entry name" value="PI-Interact_SigTrans_Reg"/>
</dbReference>
<dbReference type="PANTHER" id="PTHR14336:SF5">
    <property type="entry name" value="PLECKSTRIN HOMOLOGY DOMAIN-CONTAINING FAMILY A MEMBER 2"/>
    <property type="match status" value="1"/>
</dbReference>
<dbReference type="PANTHER" id="PTHR14336">
    <property type="entry name" value="TANDEM PH DOMAIN CONTAINING PROTEIN"/>
    <property type="match status" value="1"/>
</dbReference>
<dbReference type="Pfam" id="PF00169">
    <property type="entry name" value="PH"/>
    <property type="match status" value="2"/>
</dbReference>
<dbReference type="SMART" id="SM00233">
    <property type="entry name" value="PH"/>
    <property type="match status" value="2"/>
</dbReference>
<dbReference type="SUPFAM" id="SSF50729">
    <property type="entry name" value="PH domain-like"/>
    <property type="match status" value="2"/>
</dbReference>
<dbReference type="PROSITE" id="PS50003">
    <property type="entry name" value="PH_DOMAIN"/>
    <property type="match status" value="2"/>
</dbReference>
<reference key="1">
    <citation type="journal article" date="2000" name="Biochem. J.">
        <title>Identification of pleckstrin-homology-domain-containing proteins with novel phosphoinositide-binding specificities.</title>
        <authorList>
            <person name="Dowler S.J."/>
            <person name="Currie R.A."/>
            <person name="Campbell D.G."/>
            <person name="Deak M."/>
            <person name="Kular G."/>
            <person name="Downes C.P."/>
            <person name="Alessi D.R."/>
        </authorList>
    </citation>
    <scope>NUCLEOTIDE SEQUENCE [MRNA]</scope>
</reference>
<reference key="2">
    <citation type="journal article" date="2002" name="Mol. Cell. Biol.">
        <title>TAPP1 and TAPP2 are targets of phosphatidylinositol 3-kinase signaling in B cells: sustained plasma membrane recruitment triggered by the B-cell antigen receptor.</title>
        <authorList>
            <person name="Marshall A.J."/>
            <person name="Krahn A.K."/>
            <person name="Ma K."/>
            <person name="Duronio V."/>
            <person name="Hou S."/>
        </authorList>
    </citation>
    <scope>NUCLEOTIDE SEQUENCE [MRNA]</scope>
    <scope>FUNCTION</scope>
    <scope>SUBCELLULAR LOCATION</scope>
    <source>
        <strain>BALB/cJ</strain>
    </source>
</reference>
<reference key="3">
    <citation type="journal article" date="2005" name="Science">
        <title>The transcriptional landscape of the mammalian genome.</title>
        <authorList>
            <person name="Carninci P."/>
            <person name="Kasukawa T."/>
            <person name="Katayama S."/>
            <person name="Gough J."/>
            <person name="Frith M.C."/>
            <person name="Maeda N."/>
            <person name="Oyama R."/>
            <person name="Ravasi T."/>
            <person name="Lenhard B."/>
            <person name="Wells C."/>
            <person name="Kodzius R."/>
            <person name="Shimokawa K."/>
            <person name="Bajic V.B."/>
            <person name="Brenner S.E."/>
            <person name="Batalov S."/>
            <person name="Forrest A.R."/>
            <person name="Zavolan M."/>
            <person name="Davis M.J."/>
            <person name="Wilming L.G."/>
            <person name="Aidinis V."/>
            <person name="Allen J.E."/>
            <person name="Ambesi-Impiombato A."/>
            <person name="Apweiler R."/>
            <person name="Aturaliya R.N."/>
            <person name="Bailey T.L."/>
            <person name="Bansal M."/>
            <person name="Baxter L."/>
            <person name="Beisel K.W."/>
            <person name="Bersano T."/>
            <person name="Bono H."/>
            <person name="Chalk A.M."/>
            <person name="Chiu K.P."/>
            <person name="Choudhary V."/>
            <person name="Christoffels A."/>
            <person name="Clutterbuck D.R."/>
            <person name="Crowe M.L."/>
            <person name="Dalla E."/>
            <person name="Dalrymple B.P."/>
            <person name="de Bono B."/>
            <person name="Della Gatta G."/>
            <person name="di Bernardo D."/>
            <person name="Down T."/>
            <person name="Engstrom P."/>
            <person name="Fagiolini M."/>
            <person name="Faulkner G."/>
            <person name="Fletcher C.F."/>
            <person name="Fukushima T."/>
            <person name="Furuno M."/>
            <person name="Futaki S."/>
            <person name="Gariboldi M."/>
            <person name="Georgii-Hemming P."/>
            <person name="Gingeras T.R."/>
            <person name="Gojobori T."/>
            <person name="Green R.E."/>
            <person name="Gustincich S."/>
            <person name="Harbers M."/>
            <person name="Hayashi Y."/>
            <person name="Hensch T.K."/>
            <person name="Hirokawa N."/>
            <person name="Hill D."/>
            <person name="Huminiecki L."/>
            <person name="Iacono M."/>
            <person name="Ikeo K."/>
            <person name="Iwama A."/>
            <person name="Ishikawa T."/>
            <person name="Jakt M."/>
            <person name="Kanapin A."/>
            <person name="Katoh M."/>
            <person name="Kawasawa Y."/>
            <person name="Kelso J."/>
            <person name="Kitamura H."/>
            <person name="Kitano H."/>
            <person name="Kollias G."/>
            <person name="Krishnan S.P."/>
            <person name="Kruger A."/>
            <person name="Kummerfeld S.K."/>
            <person name="Kurochkin I.V."/>
            <person name="Lareau L.F."/>
            <person name="Lazarevic D."/>
            <person name="Lipovich L."/>
            <person name="Liu J."/>
            <person name="Liuni S."/>
            <person name="McWilliam S."/>
            <person name="Madan Babu M."/>
            <person name="Madera M."/>
            <person name="Marchionni L."/>
            <person name="Matsuda H."/>
            <person name="Matsuzawa S."/>
            <person name="Miki H."/>
            <person name="Mignone F."/>
            <person name="Miyake S."/>
            <person name="Morris K."/>
            <person name="Mottagui-Tabar S."/>
            <person name="Mulder N."/>
            <person name="Nakano N."/>
            <person name="Nakauchi H."/>
            <person name="Ng P."/>
            <person name="Nilsson R."/>
            <person name="Nishiguchi S."/>
            <person name="Nishikawa S."/>
            <person name="Nori F."/>
            <person name="Ohara O."/>
            <person name="Okazaki Y."/>
            <person name="Orlando V."/>
            <person name="Pang K.C."/>
            <person name="Pavan W.J."/>
            <person name="Pavesi G."/>
            <person name="Pesole G."/>
            <person name="Petrovsky N."/>
            <person name="Piazza S."/>
            <person name="Reed J."/>
            <person name="Reid J.F."/>
            <person name="Ring B.Z."/>
            <person name="Ringwald M."/>
            <person name="Rost B."/>
            <person name="Ruan Y."/>
            <person name="Salzberg S.L."/>
            <person name="Sandelin A."/>
            <person name="Schneider C."/>
            <person name="Schoenbach C."/>
            <person name="Sekiguchi K."/>
            <person name="Semple C.A."/>
            <person name="Seno S."/>
            <person name="Sessa L."/>
            <person name="Sheng Y."/>
            <person name="Shibata Y."/>
            <person name="Shimada H."/>
            <person name="Shimada K."/>
            <person name="Silva D."/>
            <person name="Sinclair B."/>
            <person name="Sperling S."/>
            <person name="Stupka E."/>
            <person name="Sugiura K."/>
            <person name="Sultana R."/>
            <person name="Takenaka Y."/>
            <person name="Taki K."/>
            <person name="Tammoja K."/>
            <person name="Tan S.L."/>
            <person name="Tang S."/>
            <person name="Taylor M.S."/>
            <person name="Tegner J."/>
            <person name="Teichmann S.A."/>
            <person name="Ueda H.R."/>
            <person name="van Nimwegen E."/>
            <person name="Verardo R."/>
            <person name="Wei C.L."/>
            <person name="Yagi K."/>
            <person name="Yamanishi H."/>
            <person name="Zabarovsky E."/>
            <person name="Zhu S."/>
            <person name="Zimmer A."/>
            <person name="Hide W."/>
            <person name="Bult C."/>
            <person name="Grimmond S.M."/>
            <person name="Teasdale R.D."/>
            <person name="Liu E.T."/>
            <person name="Brusic V."/>
            <person name="Quackenbush J."/>
            <person name="Wahlestedt C."/>
            <person name="Mattick J.S."/>
            <person name="Hume D.A."/>
            <person name="Kai C."/>
            <person name="Sasaki D."/>
            <person name="Tomaru Y."/>
            <person name="Fukuda S."/>
            <person name="Kanamori-Katayama M."/>
            <person name="Suzuki M."/>
            <person name="Aoki J."/>
            <person name="Arakawa T."/>
            <person name="Iida J."/>
            <person name="Imamura K."/>
            <person name="Itoh M."/>
            <person name="Kato T."/>
            <person name="Kawaji H."/>
            <person name="Kawagashira N."/>
            <person name="Kawashima T."/>
            <person name="Kojima M."/>
            <person name="Kondo S."/>
            <person name="Konno H."/>
            <person name="Nakano K."/>
            <person name="Ninomiya N."/>
            <person name="Nishio T."/>
            <person name="Okada M."/>
            <person name="Plessy C."/>
            <person name="Shibata K."/>
            <person name="Shiraki T."/>
            <person name="Suzuki S."/>
            <person name="Tagami M."/>
            <person name="Waki K."/>
            <person name="Watahiki A."/>
            <person name="Okamura-Oho Y."/>
            <person name="Suzuki H."/>
            <person name="Kawai J."/>
            <person name="Hayashizaki Y."/>
        </authorList>
    </citation>
    <scope>NUCLEOTIDE SEQUENCE [LARGE SCALE MRNA]</scope>
    <source>
        <strain>C57BL/6J</strain>
        <strain>NOD</strain>
        <tissue>Olfactory bulb</tissue>
        <tissue>Thymus</tissue>
    </source>
</reference>
<reference key="4">
    <citation type="journal article" date="2004" name="Genome Res.">
        <title>The status, quality, and expansion of the NIH full-length cDNA project: the Mammalian Gene Collection (MGC).</title>
        <authorList>
            <consortium name="The MGC Project Team"/>
        </authorList>
    </citation>
    <scope>NUCLEOTIDE SEQUENCE [LARGE SCALE MRNA]</scope>
    <source>
        <strain>FVB/N</strain>
        <tissue>Mammary gland</tissue>
    </source>
</reference>
<reference key="5">
    <citation type="journal article" date="2002" name="Biochem. J.">
        <title>Evidence that the tandem-pleckstrin-homology-domain-containing protein TAPP1 interacts with Ptd(3,4)P2 and the multi-PDZ-domain-containing protein MUPP1 in vivo.</title>
        <authorList>
            <person name="Kimber W.A."/>
            <person name="Trinkle-Mulcahy L."/>
            <person name="Cheung P.C.F."/>
            <person name="Deak M."/>
            <person name="Marsden L.J."/>
            <person name="Kieloch A."/>
            <person name="Watt S."/>
            <person name="Javier R.T."/>
            <person name="Gray A."/>
            <person name="Downes C.P."/>
            <person name="Lucocq J.M."/>
            <person name="Alessi D.R."/>
        </authorList>
    </citation>
    <scope>INTERACTION WITH MPDZ</scope>
</reference>
<reference key="6">
    <citation type="journal article" date="2003" name="Biochem. J.">
        <title>Interaction of the protein tyrosine phosphatase PTPL1 with the PtdIns(3,4)P2-binding adaptor protein TAPP1.</title>
        <authorList>
            <person name="Kimber W.A."/>
            <person name="Deak M."/>
            <person name="Prescott A.R."/>
            <person name="Alessi D.R."/>
        </authorList>
    </citation>
    <scope>INTERACTION WITH PTPN13</scope>
    <scope>FUNCTION</scope>
</reference>
<reference key="7">
    <citation type="journal article" date="2007" name="Proc. Natl. Acad. Sci. U.S.A.">
        <title>Large-scale phosphorylation analysis of mouse liver.</title>
        <authorList>
            <person name="Villen J."/>
            <person name="Beausoleil S.A."/>
            <person name="Gerber S.A."/>
            <person name="Gygi S.P."/>
        </authorList>
    </citation>
    <scope>IDENTIFICATION BY MASS SPECTROMETRY [LARGE SCALE ANALYSIS]</scope>
    <source>
        <tissue>Liver</tissue>
    </source>
</reference>
<reference key="8">
    <citation type="journal article" date="2010" name="Cell">
        <title>A tissue-specific atlas of mouse protein phosphorylation and expression.</title>
        <authorList>
            <person name="Huttlin E.L."/>
            <person name="Jedrychowski M.P."/>
            <person name="Elias J.E."/>
            <person name="Goswami T."/>
            <person name="Rad R."/>
            <person name="Beausoleil S.A."/>
            <person name="Villen J."/>
            <person name="Haas W."/>
            <person name="Sowa M.E."/>
            <person name="Gygi S.P."/>
        </authorList>
    </citation>
    <scope>IDENTIFICATION BY MASS SPECTROMETRY [LARGE SCALE ANALYSIS]</scope>
    <source>
        <tissue>Brown adipose tissue</tissue>
        <tissue>Heart</tissue>
        <tissue>Kidney</tissue>
        <tissue>Liver</tissue>
        <tissue>Lung</tissue>
        <tissue>Spleen</tissue>
    </source>
</reference>
<reference key="9">
    <citation type="submission" date="2004-05" db="PDB data bank">
        <title>Solution structure of the N-terminal pleckstrin homology domain of TAPP2 from mouse.</title>
        <authorList>
            <consortium name="RIKEN structural genomics initiative (RSGI)"/>
        </authorList>
    </citation>
    <scope>STRUCTURE BY NMR OF 1-113</scope>
</reference>
<feature type="chain" id="PRO_0000053877" description="Pleckstrin homology domain-containing family A member 2">
    <location>
        <begin position="1"/>
        <end position="425"/>
    </location>
</feature>
<feature type="domain" description="PH 1" evidence="2">
    <location>
        <begin position="7"/>
        <end position="113"/>
    </location>
</feature>
<feature type="domain" description="PH 2" evidence="2">
    <location>
        <begin position="198"/>
        <end position="298"/>
    </location>
</feature>
<feature type="region of interest" description="Disordered" evidence="3">
    <location>
        <begin position="310"/>
        <end position="425"/>
    </location>
</feature>
<feature type="compositionally biased region" description="Polar residues" evidence="3">
    <location>
        <begin position="310"/>
        <end position="331"/>
    </location>
</feature>
<feature type="compositionally biased region" description="Basic and acidic residues" evidence="3">
    <location>
        <begin position="363"/>
        <end position="375"/>
    </location>
</feature>
<feature type="compositionally biased region" description="Basic and acidic residues" evidence="3">
    <location>
        <begin position="400"/>
        <end position="410"/>
    </location>
</feature>
<feature type="modified residue" description="Phosphoserine" evidence="1">
    <location>
        <position position="184"/>
    </location>
</feature>
<feature type="modified residue" description="Phosphoserine" evidence="1">
    <location>
        <position position="314"/>
    </location>
</feature>
<feature type="modified residue" description="Phosphoserine" evidence="1">
    <location>
        <position position="349"/>
    </location>
</feature>
<feature type="cross-link" description="Glycyl lysine isopeptide (Lys-Gly) (interchain with G-Cter in SUMO2)" evidence="1">
    <location>
        <position position="141"/>
    </location>
</feature>
<feature type="sequence conflict" description="In Ref. 3; BAC31224." evidence="6" ref="3">
    <original>R</original>
    <variation>H</variation>
    <location>
        <position position="240"/>
    </location>
</feature>
<feature type="strand" evidence="7">
    <location>
        <begin position="14"/>
        <end position="17"/>
    </location>
</feature>
<feature type="strand" evidence="7">
    <location>
        <begin position="25"/>
        <end position="33"/>
    </location>
</feature>
<feature type="turn" evidence="7">
    <location>
        <begin position="34"/>
        <end position="37"/>
    </location>
</feature>
<feature type="strand" evidence="7">
    <location>
        <begin position="38"/>
        <end position="44"/>
    </location>
</feature>
<feature type="turn" evidence="7">
    <location>
        <begin position="46"/>
        <end position="48"/>
    </location>
</feature>
<feature type="strand" evidence="7">
    <location>
        <begin position="56"/>
        <end position="60"/>
    </location>
</feature>
<feature type="turn" evidence="7">
    <location>
        <begin position="61"/>
        <end position="63"/>
    </location>
</feature>
<feature type="strand" evidence="7">
    <location>
        <begin position="66"/>
        <end position="69"/>
    </location>
</feature>
<feature type="turn" evidence="7">
    <location>
        <begin position="72"/>
        <end position="74"/>
    </location>
</feature>
<feature type="strand" evidence="7">
    <location>
        <begin position="79"/>
        <end position="85"/>
    </location>
</feature>
<feature type="strand" evidence="7">
    <location>
        <begin position="90"/>
        <end position="94"/>
    </location>
</feature>
<feature type="helix" evidence="7">
    <location>
        <begin position="98"/>
        <end position="110"/>
    </location>
</feature>
<feature type="turn" evidence="7">
    <location>
        <begin position="111"/>
        <end position="113"/>
    </location>
</feature>
<name>PKHA2_MOUSE</name>
<keyword id="KW-0002">3D-structure</keyword>
<keyword id="KW-1003">Cell membrane</keyword>
<keyword id="KW-0963">Cytoplasm</keyword>
<keyword id="KW-1017">Isopeptide bond</keyword>
<keyword id="KW-0446">Lipid-binding</keyword>
<keyword id="KW-0472">Membrane</keyword>
<keyword id="KW-0539">Nucleus</keyword>
<keyword id="KW-0597">Phosphoprotein</keyword>
<keyword id="KW-1185">Reference proteome</keyword>
<keyword id="KW-0677">Repeat</keyword>
<keyword id="KW-0832">Ubl conjugation</keyword>
<evidence type="ECO:0000250" key="1">
    <source>
        <dbReference type="UniProtKB" id="Q9HB19"/>
    </source>
</evidence>
<evidence type="ECO:0000255" key="2">
    <source>
        <dbReference type="PROSITE-ProRule" id="PRU00145"/>
    </source>
</evidence>
<evidence type="ECO:0000256" key="3">
    <source>
        <dbReference type="SAM" id="MobiDB-lite"/>
    </source>
</evidence>
<evidence type="ECO:0000269" key="4">
    <source>
    </source>
</evidence>
<evidence type="ECO:0000269" key="5">
    <source>
    </source>
</evidence>
<evidence type="ECO:0000305" key="6"/>
<evidence type="ECO:0007829" key="7">
    <source>
        <dbReference type="PDB" id="1V5P"/>
    </source>
</evidence>
<sequence length="425" mass="47380">MPYVDRQNRICGFLDIEDNENSGKFLRRYFILDTQANCLLWYMDNPQNLAVGAGAVGSLQLTYISKVSIATPKQKPKTPFCFVINALSQRYFLQANDQKDLKDWVEALNQASKITVPKAGTVPLATEVLKNLTAPPTLEKKPQVAYKTEIIGGVVVQTPISQNGGDGQEGCEPGTHAFLRRSQSYIPTSGCRPSTGPPLIKSGYCVKQGNVRKSWKRRFFALDDFTICYFKCEQDREPLRTIPLKDVLKTHECLVKSGDLLMRDNLFEIITTSRTFYVQADSPEDMHSWIEGIGAAVQALKCHPREPSFSRSISLTRPGSSTLTSAPNSILSRRRPPAEEKRGLCKAPSVASSWQPWTPVPQAEEKPLSVEHAPEDSLFMPNPGESTATGVLASSRVRHRSEPQHPKEKPFVFNLDDENIRTSDV</sequence>
<gene>
    <name type="primary">Plekha2</name>
    <name type="synonym">Tapp2</name>
</gene>